<protein>
    <recommendedName>
        <fullName>Cytochrome b6-f complex subunit 8</fullName>
    </recommendedName>
    <alternativeName>
        <fullName>Cytochrome b6-f complex subunit PetN</fullName>
    </alternativeName>
    <alternativeName>
        <fullName>Cytochrome b6-f complex subunit VIII</fullName>
    </alternativeName>
</protein>
<evidence type="ECO:0000250" key="1"/>
<evidence type="ECO:0000255" key="2"/>
<evidence type="ECO:0000305" key="3"/>
<accession>P41611</accession>
<dbReference type="EMBL" id="D17510">
    <property type="protein sequence ID" value="BAA04328.1"/>
    <property type="molecule type" value="Genomic_DNA"/>
</dbReference>
<dbReference type="PIR" id="T07450">
    <property type="entry name" value="T07450"/>
</dbReference>
<dbReference type="RefSeq" id="NP_042371.1">
    <property type="nucleotide sequence ID" value="NC_001631.1"/>
</dbReference>
<dbReference type="SMR" id="P41611"/>
<dbReference type="GeneID" id="1457638"/>
<dbReference type="GO" id="GO:0009535">
    <property type="term" value="C:chloroplast thylakoid membrane"/>
    <property type="evidence" value="ECO:0007669"/>
    <property type="project" value="UniProtKB-SubCell"/>
</dbReference>
<dbReference type="GO" id="GO:0009512">
    <property type="term" value="C:cytochrome b6f complex"/>
    <property type="evidence" value="ECO:0007669"/>
    <property type="project" value="InterPro"/>
</dbReference>
<dbReference type="GO" id="GO:0045158">
    <property type="term" value="F:electron transporter, transferring electrons within cytochrome b6/f complex of photosystem II activity"/>
    <property type="evidence" value="ECO:0007669"/>
    <property type="project" value="InterPro"/>
</dbReference>
<dbReference type="GO" id="GO:0017004">
    <property type="term" value="P:cytochrome complex assembly"/>
    <property type="evidence" value="ECO:0007669"/>
    <property type="project" value="UniProtKB-UniRule"/>
</dbReference>
<dbReference type="GO" id="GO:0015979">
    <property type="term" value="P:photosynthesis"/>
    <property type="evidence" value="ECO:0007669"/>
    <property type="project" value="UniProtKB-KW"/>
</dbReference>
<dbReference type="HAMAP" id="MF_00395">
    <property type="entry name" value="Cytb6_f_PetN"/>
    <property type="match status" value="1"/>
</dbReference>
<dbReference type="InterPro" id="IPR036143">
    <property type="entry name" value="Cytochr_b6-f_cplx_su8_sf"/>
</dbReference>
<dbReference type="InterPro" id="IPR005497">
    <property type="entry name" value="Cytochrome_b6-f_cplx_su8"/>
</dbReference>
<dbReference type="Pfam" id="PF03742">
    <property type="entry name" value="PetN"/>
    <property type="match status" value="1"/>
</dbReference>
<dbReference type="SUPFAM" id="SSF103451">
    <property type="entry name" value="PetN subunit of the cytochrome b6f complex"/>
    <property type="match status" value="1"/>
</dbReference>
<comment type="function">
    <text evidence="1">Component of the cytochrome b6-f complex, which mediates electron transfer between photosystem II (PSII) and photosystem I (PSI), cyclic electron flow around PSI, and state transitions.</text>
</comment>
<comment type="subunit">
    <text evidence="1">The 4 large subunits of the cytochrome b6-f complex are cytochrome b6, subunit IV (17 kDa polypeptide, PetD), cytochrome f and the Rieske protein, while the 4 small subunits are PetG, PetL, PetM and PetN. The complex functions as a dimer (By similarity).</text>
</comment>
<comment type="subcellular location">
    <subcellularLocation>
        <location evidence="1">Plastid</location>
        <location evidence="1">Chloroplast thylakoid membrane</location>
        <topology evidence="1">Single-pass membrane protein</topology>
    </subcellularLocation>
</comment>
<comment type="similarity">
    <text evidence="3">Belongs to the PetN family.</text>
</comment>
<gene>
    <name type="primary">petN</name>
    <name type="synonym">ycf6</name>
</gene>
<keyword id="KW-0150">Chloroplast</keyword>
<keyword id="KW-0249">Electron transport</keyword>
<keyword id="KW-0472">Membrane</keyword>
<keyword id="KW-0602">Photosynthesis</keyword>
<keyword id="KW-0934">Plastid</keyword>
<keyword id="KW-0793">Thylakoid</keyword>
<keyword id="KW-0812">Transmembrane</keyword>
<keyword id="KW-1133">Transmembrane helix</keyword>
<keyword id="KW-0813">Transport</keyword>
<organism>
    <name type="scientific">Pinus thunbergii</name>
    <name type="common">Japanese black pine</name>
    <name type="synonym">Pinus thunbergiana</name>
    <dbReference type="NCBI Taxonomy" id="3350"/>
    <lineage>
        <taxon>Eukaryota</taxon>
        <taxon>Viridiplantae</taxon>
        <taxon>Streptophyta</taxon>
        <taxon>Embryophyta</taxon>
        <taxon>Tracheophyta</taxon>
        <taxon>Spermatophyta</taxon>
        <taxon>Pinopsida</taxon>
        <taxon>Pinidae</taxon>
        <taxon>Conifers I</taxon>
        <taxon>Pinales</taxon>
        <taxon>Pinaceae</taxon>
        <taxon>Pinus</taxon>
        <taxon>Pinus subgen. Pinus</taxon>
    </lineage>
</organism>
<reference key="1">
    <citation type="journal article" date="1994" name="Proc. Natl. Acad. Sci. U.S.A.">
        <title>Loss of all ndh genes as determined by sequencing the entire chloroplast genome of the black pine Pinus thunbergii.</title>
        <authorList>
            <person name="Wakasugi T."/>
            <person name="Tsudzuki J."/>
            <person name="Ito S."/>
            <person name="Nakashima K."/>
            <person name="Tsudzuki T."/>
            <person name="Sugiura M."/>
        </authorList>
    </citation>
    <scope>NUCLEOTIDE SEQUENCE [LARGE SCALE GENOMIC DNA]</scope>
</reference>
<name>PETN_PINTH</name>
<geneLocation type="chloroplast"/>
<feature type="chain" id="PRO_0000217124" description="Cytochrome b6-f complex subunit 8">
    <location>
        <begin position="1"/>
        <end position="29"/>
    </location>
</feature>
<feature type="transmembrane region" description="Helical" evidence="2">
    <location>
        <begin position="3"/>
        <end position="23"/>
    </location>
</feature>
<proteinExistence type="inferred from homology"/>
<sequence>MDIVGITWAALMVVFTFSLSLVVWGRSGL</sequence>